<proteinExistence type="inferred from homology"/>
<accession>Q8X3W8</accession>
<accession>Q8X3D4</accession>
<keyword id="KW-0007">Acetylation</keyword>
<keyword id="KW-0030">Aminoacyl-tRNA synthetase</keyword>
<keyword id="KW-0067">ATP-binding</keyword>
<keyword id="KW-0963">Cytoplasm</keyword>
<keyword id="KW-0436">Ligase</keyword>
<keyword id="KW-0479">Metal-binding</keyword>
<keyword id="KW-0547">Nucleotide-binding</keyword>
<keyword id="KW-0648">Protein biosynthesis</keyword>
<keyword id="KW-1185">Reference proteome</keyword>
<keyword id="KW-0694">RNA-binding</keyword>
<keyword id="KW-0820">tRNA-binding</keyword>
<keyword id="KW-0862">Zinc</keyword>
<evidence type="ECO:0000255" key="1">
    <source>
        <dbReference type="HAMAP-Rule" id="MF_00036"/>
    </source>
</evidence>
<evidence type="ECO:0000305" key="2"/>
<organism>
    <name type="scientific">Escherichia coli O157:H7</name>
    <dbReference type="NCBI Taxonomy" id="83334"/>
    <lineage>
        <taxon>Bacteria</taxon>
        <taxon>Pseudomonadati</taxon>
        <taxon>Pseudomonadota</taxon>
        <taxon>Gammaproteobacteria</taxon>
        <taxon>Enterobacterales</taxon>
        <taxon>Enterobacteriaceae</taxon>
        <taxon>Escherichia</taxon>
    </lineage>
</organism>
<comment type="function">
    <text evidence="1">Catalyzes the attachment of alanine to tRNA(Ala) in a two-step reaction: alanine is first activated by ATP to form Ala-AMP and then transferred to the acceptor end of tRNA(Ala). Also edits incorrectly charged Ser-tRNA(Ala) and Gly-tRNA(Ala) via its editing domain.</text>
</comment>
<comment type="catalytic activity">
    <reaction evidence="1">
        <text>tRNA(Ala) + L-alanine + ATP = L-alanyl-tRNA(Ala) + AMP + diphosphate</text>
        <dbReference type="Rhea" id="RHEA:12540"/>
        <dbReference type="Rhea" id="RHEA-COMP:9657"/>
        <dbReference type="Rhea" id="RHEA-COMP:9923"/>
        <dbReference type="ChEBI" id="CHEBI:30616"/>
        <dbReference type="ChEBI" id="CHEBI:33019"/>
        <dbReference type="ChEBI" id="CHEBI:57972"/>
        <dbReference type="ChEBI" id="CHEBI:78442"/>
        <dbReference type="ChEBI" id="CHEBI:78497"/>
        <dbReference type="ChEBI" id="CHEBI:456215"/>
        <dbReference type="EC" id="6.1.1.7"/>
    </reaction>
</comment>
<comment type="cofactor">
    <cofactor evidence="1">
        <name>Zn(2+)</name>
        <dbReference type="ChEBI" id="CHEBI:29105"/>
    </cofactor>
    <text evidence="1">Binds 1 zinc ion per subunit.</text>
</comment>
<comment type="subunit">
    <text evidence="1">Homotetramer.</text>
</comment>
<comment type="subcellular location">
    <subcellularLocation>
        <location evidence="1">Cytoplasm</location>
    </subcellularLocation>
</comment>
<comment type="domain">
    <text evidence="1">Consists of three domains; the N-terminal catalytic domain, the editing domain and the C-terminal C-Ala domain. The editing domain removes incorrectly charged amino acids, while the C-Ala domain, along with tRNA(Ala), serves as a bridge to cooperatively bring together the editing and aminoacylation centers thus stimulating deacylation of misacylated tRNAs.</text>
</comment>
<comment type="similarity">
    <text evidence="1">Belongs to the class-II aminoacyl-tRNA synthetase family.</text>
</comment>
<name>SYA_ECO57</name>
<sequence length="876" mass="96032">MSKSTAEIRQAFLDFFHSKGHQVVASSSLVPHNDPTLLFTNAGMNQFKDVFLGLDKRNYSRATTSQRCVRAGGKHNDLENVGYTARHHTFFEMLGNFSFGDYFKHDAIQFAWELLTSEKWFALPKERLWVTVYESDDEAYEIWEKEVGIPRERIIRIGDNKGAPYASDNFWQMGDTGPCGPCTEIFYDHGDHIWGGPPGSPEEDGDRYIEIWNIVFMQFNRQADGTMEPLPKPSVDTGMGLERIAAVLQHVNSNYDIDLFRTLIQAVAKVTGATDLSNKSLRVIADHIRSCAFLIADGVMPSNENRGYVLRRIIRRAVRHGNMLGAKETFFYKLVGPLIDVMGSAGEDLKRQQAQVEQVLKTEEEQFARTLERGLALLDEELAKLSGDTLDGETAFRLYDTYGFPVDLTADVCRERNIKVDEAGFEAAMEEQRRRAREASGFGADYNAMIRVDSASEFKGYDHLELNGKVTALFVDGKAVDAINAGQEAVVVLDQTPFYAESGGQVGDKGELKGANFSFVVEDTQKYGQAIGHIGKLAAGSLKVGDAVQADVDEARRARIRLNHSATHLMHAALRQVLGTHVSQKGSLVNDKVLRFDFSHNEAMKPEEIRAVEDLVNAQIRRNLPIETNIMDLEAAKAKGAMALFGEKYDERVRVLSMGDFSTELCGGTHASRTGDIGLFRIISESGTAAGVRRIEAVTGEGAITTVHADSDRLSEVAHLLKGDSNNLADKVRSVLERTRQLEKELQQLKEQAAAQESANLSSKAIDVNGVKLLVSELSGVEPKMLRTMVDDLKNQLGSTIIVLATVAEGKVSLIAGVSKDVTDRVKAGELIGMVAQQVGGKGGGRPDMAQAGGTDAAALPAALASVKGWVSAKLQ</sequence>
<protein>
    <recommendedName>
        <fullName evidence="1">Alanine--tRNA ligase</fullName>
        <ecNumber evidence="1">6.1.1.7</ecNumber>
    </recommendedName>
    <alternativeName>
        <fullName evidence="1">Alanyl-tRNA synthetase</fullName>
        <shortName evidence="1">AlaRS</shortName>
    </alternativeName>
</protein>
<dbReference type="EC" id="6.1.1.7" evidence="1"/>
<dbReference type="EMBL" id="AE005174">
    <property type="protein sequence ID" value="AAG57801.1"/>
    <property type="molecule type" value="Genomic_DNA"/>
</dbReference>
<dbReference type="EMBL" id="BA000007">
    <property type="protein sequence ID" value="BAB36977.1"/>
    <property type="molecule type" value="Genomic_DNA"/>
</dbReference>
<dbReference type="PIR" id="B91073">
    <property type="entry name" value="B91073"/>
</dbReference>
<dbReference type="PIR" id="E85917">
    <property type="entry name" value="E85917"/>
</dbReference>
<dbReference type="RefSeq" id="NP_311581.1">
    <property type="nucleotide sequence ID" value="NC_002695.1"/>
</dbReference>
<dbReference type="RefSeq" id="WP_000047198.1">
    <property type="nucleotide sequence ID" value="NZ_VOAI01000003.1"/>
</dbReference>
<dbReference type="SMR" id="Q8X3W8"/>
<dbReference type="STRING" id="155864.Z3999"/>
<dbReference type="GeneID" id="914724"/>
<dbReference type="KEGG" id="ece:Z3999"/>
<dbReference type="KEGG" id="ecs:ECs_3554"/>
<dbReference type="PATRIC" id="fig|386585.9.peg.3711"/>
<dbReference type="eggNOG" id="COG0013">
    <property type="taxonomic scope" value="Bacteria"/>
</dbReference>
<dbReference type="HOGENOM" id="CLU_004485_1_1_6"/>
<dbReference type="OMA" id="NKKDNFW"/>
<dbReference type="Proteomes" id="UP000000558">
    <property type="component" value="Chromosome"/>
</dbReference>
<dbReference type="Proteomes" id="UP000002519">
    <property type="component" value="Chromosome"/>
</dbReference>
<dbReference type="GO" id="GO:0005829">
    <property type="term" value="C:cytosol"/>
    <property type="evidence" value="ECO:0007669"/>
    <property type="project" value="TreeGrafter"/>
</dbReference>
<dbReference type="GO" id="GO:0004813">
    <property type="term" value="F:alanine-tRNA ligase activity"/>
    <property type="evidence" value="ECO:0007669"/>
    <property type="project" value="UniProtKB-UniRule"/>
</dbReference>
<dbReference type="GO" id="GO:0002161">
    <property type="term" value="F:aminoacyl-tRNA deacylase activity"/>
    <property type="evidence" value="ECO:0007669"/>
    <property type="project" value="TreeGrafter"/>
</dbReference>
<dbReference type="GO" id="GO:0005524">
    <property type="term" value="F:ATP binding"/>
    <property type="evidence" value="ECO:0007669"/>
    <property type="project" value="UniProtKB-UniRule"/>
</dbReference>
<dbReference type="GO" id="GO:0000049">
    <property type="term" value="F:tRNA binding"/>
    <property type="evidence" value="ECO:0007669"/>
    <property type="project" value="UniProtKB-KW"/>
</dbReference>
<dbReference type="GO" id="GO:0008270">
    <property type="term" value="F:zinc ion binding"/>
    <property type="evidence" value="ECO:0007669"/>
    <property type="project" value="UniProtKB-UniRule"/>
</dbReference>
<dbReference type="GO" id="GO:0006419">
    <property type="term" value="P:alanyl-tRNA aminoacylation"/>
    <property type="evidence" value="ECO:0007669"/>
    <property type="project" value="UniProtKB-UniRule"/>
</dbReference>
<dbReference type="GO" id="GO:0045892">
    <property type="term" value="P:negative regulation of DNA-templated transcription"/>
    <property type="evidence" value="ECO:0007669"/>
    <property type="project" value="TreeGrafter"/>
</dbReference>
<dbReference type="CDD" id="cd00673">
    <property type="entry name" value="AlaRS_core"/>
    <property type="match status" value="1"/>
</dbReference>
<dbReference type="FunFam" id="2.40.30.130:FF:000001">
    <property type="entry name" value="Alanine--tRNA ligase"/>
    <property type="match status" value="1"/>
</dbReference>
<dbReference type="FunFam" id="3.10.310.40:FF:000001">
    <property type="entry name" value="Alanine--tRNA ligase"/>
    <property type="match status" value="1"/>
</dbReference>
<dbReference type="FunFam" id="3.30.54.20:FF:000001">
    <property type="entry name" value="Alanine--tRNA ligase"/>
    <property type="match status" value="1"/>
</dbReference>
<dbReference type="FunFam" id="3.30.930.10:FF:000004">
    <property type="entry name" value="Alanine--tRNA ligase"/>
    <property type="match status" value="1"/>
</dbReference>
<dbReference type="FunFam" id="3.30.980.10:FF:000004">
    <property type="entry name" value="Alanine--tRNA ligase, cytoplasmic"/>
    <property type="match status" value="1"/>
</dbReference>
<dbReference type="Gene3D" id="2.40.30.130">
    <property type="match status" value="1"/>
</dbReference>
<dbReference type="Gene3D" id="3.10.310.40">
    <property type="match status" value="1"/>
</dbReference>
<dbReference type="Gene3D" id="3.30.54.20">
    <property type="match status" value="1"/>
</dbReference>
<dbReference type="Gene3D" id="6.10.250.550">
    <property type="match status" value="1"/>
</dbReference>
<dbReference type="Gene3D" id="3.30.930.10">
    <property type="entry name" value="Bira Bifunctional Protein, Domain 2"/>
    <property type="match status" value="1"/>
</dbReference>
<dbReference type="Gene3D" id="3.30.980.10">
    <property type="entry name" value="Threonyl-trna Synthetase, Chain A, domain 2"/>
    <property type="match status" value="1"/>
</dbReference>
<dbReference type="HAMAP" id="MF_00036_B">
    <property type="entry name" value="Ala_tRNA_synth_B"/>
    <property type="match status" value="1"/>
</dbReference>
<dbReference type="InterPro" id="IPR045864">
    <property type="entry name" value="aa-tRNA-synth_II/BPL/LPL"/>
</dbReference>
<dbReference type="InterPro" id="IPR002318">
    <property type="entry name" value="Ala-tRNA-lgiase_IIc"/>
</dbReference>
<dbReference type="InterPro" id="IPR018162">
    <property type="entry name" value="Ala-tRNA-ligase_IIc_anticod-bd"/>
</dbReference>
<dbReference type="InterPro" id="IPR018165">
    <property type="entry name" value="Ala-tRNA-synth_IIc_core"/>
</dbReference>
<dbReference type="InterPro" id="IPR018164">
    <property type="entry name" value="Ala-tRNA-synth_IIc_N"/>
</dbReference>
<dbReference type="InterPro" id="IPR050058">
    <property type="entry name" value="Ala-tRNA_ligase"/>
</dbReference>
<dbReference type="InterPro" id="IPR023033">
    <property type="entry name" value="Ala_tRNA_ligase_euk/bac"/>
</dbReference>
<dbReference type="InterPro" id="IPR003156">
    <property type="entry name" value="DHHA1_dom"/>
</dbReference>
<dbReference type="InterPro" id="IPR018163">
    <property type="entry name" value="Thr/Ala-tRNA-synth_IIc_edit"/>
</dbReference>
<dbReference type="InterPro" id="IPR009000">
    <property type="entry name" value="Transl_B-barrel_sf"/>
</dbReference>
<dbReference type="InterPro" id="IPR012947">
    <property type="entry name" value="tRNA_SAD"/>
</dbReference>
<dbReference type="NCBIfam" id="TIGR00344">
    <property type="entry name" value="alaS"/>
    <property type="match status" value="1"/>
</dbReference>
<dbReference type="PANTHER" id="PTHR11777:SF9">
    <property type="entry name" value="ALANINE--TRNA LIGASE, CYTOPLASMIC"/>
    <property type="match status" value="1"/>
</dbReference>
<dbReference type="PANTHER" id="PTHR11777">
    <property type="entry name" value="ALANYL-TRNA SYNTHETASE"/>
    <property type="match status" value="1"/>
</dbReference>
<dbReference type="Pfam" id="PF02272">
    <property type="entry name" value="DHHA1"/>
    <property type="match status" value="1"/>
</dbReference>
<dbReference type="Pfam" id="PF01411">
    <property type="entry name" value="tRNA-synt_2c"/>
    <property type="match status" value="1"/>
</dbReference>
<dbReference type="Pfam" id="PF07973">
    <property type="entry name" value="tRNA_SAD"/>
    <property type="match status" value="1"/>
</dbReference>
<dbReference type="PRINTS" id="PR00980">
    <property type="entry name" value="TRNASYNTHALA"/>
</dbReference>
<dbReference type="SMART" id="SM00863">
    <property type="entry name" value="tRNA_SAD"/>
    <property type="match status" value="1"/>
</dbReference>
<dbReference type="SUPFAM" id="SSF55681">
    <property type="entry name" value="Class II aaRS and biotin synthetases"/>
    <property type="match status" value="1"/>
</dbReference>
<dbReference type="SUPFAM" id="SSF101353">
    <property type="entry name" value="Putative anticodon-binding domain of alanyl-tRNA synthetase (AlaRS)"/>
    <property type="match status" value="1"/>
</dbReference>
<dbReference type="SUPFAM" id="SSF55186">
    <property type="entry name" value="ThrRS/AlaRS common domain"/>
    <property type="match status" value="1"/>
</dbReference>
<dbReference type="SUPFAM" id="SSF50447">
    <property type="entry name" value="Translation proteins"/>
    <property type="match status" value="1"/>
</dbReference>
<dbReference type="PROSITE" id="PS50860">
    <property type="entry name" value="AA_TRNA_LIGASE_II_ALA"/>
    <property type="match status" value="1"/>
</dbReference>
<feature type="chain" id="PRO_0000075114" description="Alanine--tRNA ligase">
    <location>
        <begin position="1"/>
        <end position="876"/>
    </location>
</feature>
<feature type="binding site" evidence="1">
    <location>
        <position position="564"/>
    </location>
    <ligand>
        <name>Zn(2+)</name>
        <dbReference type="ChEBI" id="CHEBI:29105"/>
    </ligand>
</feature>
<feature type="binding site" evidence="1">
    <location>
        <position position="568"/>
    </location>
    <ligand>
        <name>Zn(2+)</name>
        <dbReference type="ChEBI" id="CHEBI:29105"/>
    </ligand>
</feature>
<feature type="binding site" evidence="1">
    <location>
        <position position="666"/>
    </location>
    <ligand>
        <name>Zn(2+)</name>
        <dbReference type="ChEBI" id="CHEBI:29105"/>
    </ligand>
</feature>
<feature type="binding site" evidence="1">
    <location>
        <position position="670"/>
    </location>
    <ligand>
        <name>Zn(2+)</name>
        <dbReference type="ChEBI" id="CHEBI:29105"/>
    </ligand>
</feature>
<feature type="modified residue" description="N6-acetyllysine" evidence="1">
    <location>
        <position position="74"/>
    </location>
</feature>
<feature type="sequence conflict" description="In Ref. 1; AAG57801." evidence="2" ref="1">
    <original>DAAALPAALASVKGWVSAKLQ</original>
    <variation>GCCGLTCSVSQCERLGQREIAII</variation>
    <location>
        <begin position="856"/>
        <end position="876"/>
    </location>
</feature>
<gene>
    <name evidence="1" type="primary">alaS</name>
    <name type="ordered locus">Z3999</name>
    <name type="ordered locus">ECs3554</name>
</gene>
<reference key="1">
    <citation type="journal article" date="2001" name="Nature">
        <title>Genome sequence of enterohaemorrhagic Escherichia coli O157:H7.</title>
        <authorList>
            <person name="Perna N.T."/>
            <person name="Plunkett G. III"/>
            <person name="Burland V."/>
            <person name="Mau B."/>
            <person name="Glasner J.D."/>
            <person name="Rose D.J."/>
            <person name="Mayhew G.F."/>
            <person name="Evans P.S."/>
            <person name="Gregor J."/>
            <person name="Kirkpatrick H.A."/>
            <person name="Posfai G."/>
            <person name="Hackett J."/>
            <person name="Klink S."/>
            <person name="Boutin A."/>
            <person name="Shao Y."/>
            <person name="Miller L."/>
            <person name="Grotbeck E.J."/>
            <person name="Davis N.W."/>
            <person name="Lim A."/>
            <person name="Dimalanta E.T."/>
            <person name="Potamousis K."/>
            <person name="Apodaca J."/>
            <person name="Anantharaman T.S."/>
            <person name="Lin J."/>
            <person name="Yen G."/>
            <person name="Schwartz D.C."/>
            <person name="Welch R.A."/>
            <person name="Blattner F.R."/>
        </authorList>
    </citation>
    <scope>NUCLEOTIDE SEQUENCE [LARGE SCALE GENOMIC DNA]</scope>
    <source>
        <strain>O157:H7 / EDL933 / ATCC 700927 / EHEC</strain>
    </source>
</reference>
<reference key="2">
    <citation type="journal article" date="2001" name="DNA Res.">
        <title>Complete genome sequence of enterohemorrhagic Escherichia coli O157:H7 and genomic comparison with a laboratory strain K-12.</title>
        <authorList>
            <person name="Hayashi T."/>
            <person name="Makino K."/>
            <person name="Ohnishi M."/>
            <person name="Kurokawa K."/>
            <person name="Ishii K."/>
            <person name="Yokoyama K."/>
            <person name="Han C.-G."/>
            <person name="Ohtsubo E."/>
            <person name="Nakayama K."/>
            <person name="Murata T."/>
            <person name="Tanaka M."/>
            <person name="Tobe T."/>
            <person name="Iida T."/>
            <person name="Takami H."/>
            <person name="Honda T."/>
            <person name="Sasakawa C."/>
            <person name="Ogasawara N."/>
            <person name="Yasunaga T."/>
            <person name="Kuhara S."/>
            <person name="Shiba T."/>
            <person name="Hattori M."/>
            <person name="Shinagawa H."/>
        </authorList>
    </citation>
    <scope>NUCLEOTIDE SEQUENCE [LARGE SCALE GENOMIC DNA]</scope>
    <source>
        <strain>O157:H7 / Sakai / RIMD 0509952 / EHEC</strain>
    </source>
</reference>